<dbReference type="EC" id="3.6.4.13"/>
<dbReference type="EMBL" id="AM270241">
    <property type="protein sequence ID" value="CAK96962.1"/>
    <property type="molecule type" value="Genomic_DNA"/>
</dbReference>
<dbReference type="RefSeq" id="XP_001394643.1">
    <property type="nucleotide sequence ID" value="XM_001394606.1"/>
</dbReference>
<dbReference type="SMR" id="A2QWW0"/>
<dbReference type="EnsemblFungi" id="CAK96962">
    <property type="protein sequence ID" value="CAK96962"/>
    <property type="gene ID" value="An11g06650"/>
</dbReference>
<dbReference type="GeneID" id="4984889"/>
<dbReference type="KEGG" id="ang:An11g06650"/>
<dbReference type="VEuPathDB" id="FungiDB:An11g06650"/>
<dbReference type="HOGENOM" id="CLU_003041_13_0_1"/>
<dbReference type="Proteomes" id="UP000006706">
    <property type="component" value="Chromosome 7R"/>
</dbReference>
<dbReference type="GO" id="GO:0005730">
    <property type="term" value="C:nucleolus"/>
    <property type="evidence" value="ECO:0007669"/>
    <property type="project" value="UniProtKB-SubCell"/>
</dbReference>
<dbReference type="GO" id="GO:0005524">
    <property type="term" value="F:ATP binding"/>
    <property type="evidence" value="ECO:0007669"/>
    <property type="project" value="UniProtKB-KW"/>
</dbReference>
<dbReference type="GO" id="GO:0016887">
    <property type="term" value="F:ATP hydrolysis activity"/>
    <property type="evidence" value="ECO:0007669"/>
    <property type="project" value="RHEA"/>
</dbReference>
<dbReference type="GO" id="GO:0003723">
    <property type="term" value="F:RNA binding"/>
    <property type="evidence" value="ECO:0007669"/>
    <property type="project" value="UniProtKB-KW"/>
</dbReference>
<dbReference type="GO" id="GO:0003724">
    <property type="term" value="F:RNA helicase activity"/>
    <property type="evidence" value="ECO:0007669"/>
    <property type="project" value="UniProtKB-EC"/>
</dbReference>
<dbReference type="GO" id="GO:0006364">
    <property type="term" value="P:rRNA processing"/>
    <property type="evidence" value="ECO:0007669"/>
    <property type="project" value="UniProtKB-KW"/>
</dbReference>
<dbReference type="CDD" id="cd17946">
    <property type="entry name" value="DEADc_DDX24"/>
    <property type="match status" value="1"/>
</dbReference>
<dbReference type="CDD" id="cd18787">
    <property type="entry name" value="SF2_C_DEAD"/>
    <property type="match status" value="1"/>
</dbReference>
<dbReference type="Gene3D" id="3.40.50.300">
    <property type="entry name" value="P-loop containing nucleotide triphosphate hydrolases"/>
    <property type="match status" value="2"/>
</dbReference>
<dbReference type="InterPro" id="IPR011545">
    <property type="entry name" value="DEAD/DEAH_box_helicase_dom"/>
</dbReference>
<dbReference type="InterPro" id="IPR014001">
    <property type="entry name" value="Helicase_ATP-bd"/>
</dbReference>
<dbReference type="InterPro" id="IPR001650">
    <property type="entry name" value="Helicase_C-like"/>
</dbReference>
<dbReference type="InterPro" id="IPR027417">
    <property type="entry name" value="P-loop_NTPase"/>
</dbReference>
<dbReference type="InterPro" id="IPR000629">
    <property type="entry name" value="RNA-helicase_DEAD-box_CS"/>
</dbReference>
<dbReference type="InterPro" id="IPR014014">
    <property type="entry name" value="RNA_helicase_DEAD_Q_motif"/>
</dbReference>
<dbReference type="PANTHER" id="PTHR24031">
    <property type="entry name" value="RNA HELICASE"/>
    <property type="match status" value="1"/>
</dbReference>
<dbReference type="Pfam" id="PF00270">
    <property type="entry name" value="DEAD"/>
    <property type="match status" value="1"/>
</dbReference>
<dbReference type="Pfam" id="PF00271">
    <property type="entry name" value="Helicase_C"/>
    <property type="match status" value="1"/>
</dbReference>
<dbReference type="SMART" id="SM00487">
    <property type="entry name" value="DEXDc"/>
    <property type="match status" value="1"/>
</dbReference>
<dbReference type="SMART" id="SM00490">
    <property type="entry name" value="HELICc"/>
    <property type="match status" value="1"/>
</dbReference>
<dbReference type="SUPFAM" id="SSF52540">
    <property type="entry name" value="P-loop containing nucleoside triphosphate hydrolases"/>
    <property type="match status" value="1"/>
</dbReference>
<dbReference type="PROSITE" id="PS00039">
    <property type="entry name" value="DEAD_ATP_HELICASE"/>
    <property type="match status" value="1"/>
</dbReference>
<dbReference type="PROSITE" id="PS51192">
    <property type="entry name" value="HELICASE_ATP_BIND_1"/>
    <property type="match status" value="1"/>
</dbReference>
<dbReference type="PROSITE" id="PS51194">
    <property type="entry name" value="HELICASE_CTER"/>
    <property type="match status" value="1"/>
</dbReference>
<dbReference type="PROSITE" id="PS51195">
    <property type="entry name" value="Q_MOTIF"/>
    <property type="match status" value="1"/>
</dbReference>
<evidence type="ECO:0000250" key="1"/>
<evidence type="ECO:0000255" key="2">
    <source>
        <dbReference type="PROSITE-ProRule" id="PRU00541"/>
    </source>
</evidence>
<evidence type="ECO:0000255" key="3">
    <source>
        <dbReference type="PROSITE-ProRule" id="PRU00542"/>
    </source>
</evidence>
<evidence type="ECO:0000256" key="4">
    <source>
        <dbReference type="SAM" id="MobiDB-lite"/>
    </source>
</evidence>
<evidence type="ECO:0000305" key="5"/>
<reference key="1">
    <citation type="journal article" date="2007" name="Nat. Biotechnol.">
        <title>Genome sequencing and analysis of the versatile cell factory Aspergillus niger CBS 513.88.</title>
        <authorList>
            <person name="Pel H.J."/>
            <person name="de Winde J.H."/>
            <person name="Archer D.B."/>
            <person name="Dyer P.S."/>
            <person name="Hofmann G."/>
            <person name="Schaap P.J."/>
            <person name="Turner G."/>
            <person name="de Vries R.P."/>
            <person name="Albang R."/>
            <person name="Albermann K."/>
            <person name="Andersen M.R."/>
            <person name="Bendtsen J.D."/>
            <person name="Benen J.A.E."/>
            <person name="van den Berg M."/>
            <person name="Breestraat S."/>
            <person name="Caddick M.X."/>
            <person name="Contreras R."/>
            <person name="Cornell M."/>
            <person name="Coutinho P.M."/>
            <person name="Danchin E.G.J."/>
            <person name="Debets A.J.M."/>
            <person name="Dekker P."/>
            <person name="van Dijck P.W.M."/>
            <person name="van Dijk A."/>
            <person name="Dijkhuizen L."/>
            <person name="Driessen A.J.M."/>
            <person name="d'Enfert C."/>
            <person name="Geysens S."/>
            <person name="Goosen C."/>
            <person name="Groot G.S.P."/>
            <person name="de Groot P.W.J."/>
            <person name="Guillemette T."/>
            <person name="Henrissat B."/>
            <person name="Herweijer M."/>
            <person name="van den Hombergh J.P.T.W."/>
            <person name="van den Hondel C.A.M.J.J."/>
            <person name="van der Heijden R.T.J.M."/>
            <person name="van der Kaaij R.M."/>
            <person name="Klis F.M."/>
            <person name="Kools H.J."/>
            <person name="Kubicek C.P."/>
            <person name="van Kuyk P.A."/>
            <person name="Lauber J."/>
            <person name="Lu X."/>
            <person name="van der Maarel M.J.E.C."/>
            <person name="Meulenberg R."/>
            <person name="Menke H."/>
            <person name="Mortimer M.A."/>
            <person name="Nielsen J."/>
            <person name="Oliver S.G."/>
            <person name="Olsthoorn M."/>
            <person name="Pal K."/>
            <person name="van Peij N.N.M.E."/>
            <person name="Ram A.F.J."/>
            <person name="Rinas U."/>
            <person name="Roubos J.A."/>
            <person name="Sagt C.M.J."/>
            <person name="Schmoll M."/>
            <person name="Sun J."/>
            <person name="Ussery D."/>
            <person name="Varga J."/>
            <person name="Vervecken W."/>
            <person name="van de Vondervoort P.J.J."/>
            <person name="Wedler H."/>
            <person name="Woesten H.A.B."/>
            <person name="Zeng A.-P."/>
            <person name="van Ooyen A.J.J."/>
            <person name="Visser J."/>
            <person name="Stam H."/>
        </authorList>
    </citation>
    <scope>NUCLEOTIDE SEQUENCE [LARGE SCALE GENOMIC DNA]</scope>
    <source>
        <strain>ATCC MYA-4892 / CBS 513.88 / FGSC A1513</strain>
    </source>
</reference>
<name>MAK5_ASPNC</name>
<gene>
    <name type="primary">mak5</name>
    <name type="ORF">An11g06650</name>
</gene>
<keyword id="KW-0067">ATP-binding</keyword>
<keyword id="KW-0347">Helicase</keyword>
<keyword id="KW-0378">Hydrolase</keyword>
<keyword id="KW-0547">Nucleotide-binding</keyword>
<keyword id="KW-0539">Nucleus</keyword>
<keyword id="KW-1185">Reference proteome</keyword>
<keyword id="KW-0690">Ribosome biogenesis</keyword>
<keyword id="KW-0694">RNA-binding</keyword>
<keyword id="KW-0698">rRNA processing</keyword>
<sequence length="766" mass="84685">MGQKRQRGSKSADLQAKKRKKDVSAVEDGEDALVTVNDLNWKEVALPDRLEDAGGFFGLEEIDGVEVIKGGSEGLRFKAAHGKPKKSILKKKAPEEEEPKFDDDEWSGFSDNEVTEKKDTAPKEDQKDEQEADKPTAEEKKKAKKDRQAEQKKAKKEAKQKTTPNQEDKSIKPGLSFAALQDEEDDDGVDVSAWESLGLSPEILTSLSKMKFTTPTLVQKSCIPQILDGHDVIGKASTGSGKTLAFGIPILEHYLEKRRQDLRAGKEEKKKDTAPIALIMSPTRELAHQLAKHIGELALHAPGSNARIALLTGGLSVQKQQRVLAGADIVIGTPGRVWEVLSSGQGLIRKMSEIKFLVIDEADRLLSEGHFKEAEEILGALDRVEEGNFGGEESEDEEKEDARSERQTLVFSATFHRDLQQKLAGKARWTGGDIMSNKESMEYLLQKLKFREEKPKFIDVNPVSQMAEGLKEGIVECGAMEKDLYLYTLLLYNPKHRTLVFTNSISAVRRLTQLLQNLGLPALALHSSMAQKARLRSVERFSSPTSDPSSILVATDVAARGLDIKGIDFVIHYHAPRAADTYVHRSGRTARAGASGKSVIICAPEEMVGVVRLAAKVHANMANGKKLPLESLELDRRVVLRVRQRVDLAAKITDSNIAKEKISAEDNWLQKAAEDLGVEYDSEEFESAQGRGRGRGRGRQERQRKAGEVTKNELAAMRAELKHLLSQRVNVGVSERYLTSGRVDIEALLRGEGNNSFLGQVDPLDF</sequence>
<comment type="function">
    <text evidence="1">ATP-binding RNA helicase involved in the biogenesis of 60S ribosomal subunits and is required for the normal formation of 25S and 5.8S rRNAs.</text>
</comment>
<comment type="catalytic activity">
    <reaction>
        <text>ATP + H2O = ADP + phosphate + H(+)</text>
        <dbReference type="Rhea" id="RHEA:13065"/>
        <dbReference type="ChEBI" id="CHEBI:15377"/>
        <dbReference type="ChEBI" id="CHEBI:15378"/>
        <dbReference type="ChEBI" id="CHEBI:30616"/>
        <dbReference type="ChEBI" id="CHEBI:43474"/>
        <dbReference type="ChEBI" id="CHEBI:456216"/>
        <dbReference type="EC" id="3.6.4.13"/>
    </reaction>
</comment>
<comment type="subcellular location">
    <subcellularLocation>
        <location evidence="1">Nucleus</location>
        <location evidence="1">Nucleolus</location>
    </subcellularLocation>
</comment>
<comment type="domain">
    <text>The Q motif is unique to and characteristic of the DEAD box family of RNA helicases and controls ATP binding and hydrolysis.</text>
</comment>
<comment type="similarity">
    <text evidence="5">Belongs to the DEAD box helicase family. DDX24/MAK5 subfamily.</text>
</comment>
<organism>
    <name type="scientific">Aspergillus niger (strain ATCC MYA-4892 / CBS 513.88 / FGSC A1513)</name>
    <dbReference type="NCBI Taxonomy" id="425011"/>
    <lineage>
        <taxon>Eukaryota</taxon>
        <taxon>Fungi</taxon>
        <taxon>Dikarya</taxon>
        <taxon>Ascomycota</taxon>
        <taxon>Pezizomycotina</taxon>
        <taxon>Eurotiomycetes</taxon>
        <taxon>Eurotiomycetidae</taxon>
        <taxon>Eurotiales</taxon>
        <taxon>Aspergillaceae</taxon>
        <taxon>Aspergillus</taxon>
        <taxon>Aspergillus subgen. Circumdati</taxon>
    </lineage>
</organism>
<feature type="chain" id="PRO_0000282485" description="ATP-dependent RNA helicase mak5">
    <location>
        <begin position="1"/>
        <end position="766"/>
    </location>
</feature>
<feature type="domain" description="Helicase ATP-binding" evidence="2">
    <location>
        <begin position="223"/>
        <end position="433"/>
    </location>
</feature>
<feature type="domain" description="Helicase C-terminal" evidence="3">
    <location>
        <begin position="485"/>
        <end position="635"/>
    </location>
</feature>
<feature type="region of interest" description="Disordered" evidence="4">
    <location>
        <begin position="1"/>
        <end position="28"/>
    </location>
</feature>
<feature type="region of interest" description="Disordered" evidence="4">
    <location>
        <begin position="75"/>
        <end position="173"/>
    </location>
</feature>
<feature type="region of interest" description="Disordered" evidence="4">
    <location>
        <begin position="683"/>
        <end position="711"/>
    </location>
</feature>
<feature type="short sequence motif" description="Q motif">
    <location>
        <begin position="192"/>
        <end position="220"/>
    </location>
</feature>
<feature type="short sequence motif" description="DEAD box">
    <location>
        <begin position="360"/>
        <end position="363"/>
    </location>
</feature>
<feature type="compositionally biased region" description="Basic residues" evidence="4">
    <location>
        <begin position="78"/>
        <end position="91"/>
    </location>
</feature>
<feature type="compositionally biased region" description="Acidic residues" evidence="4">
    <location>
        <begin position="95"/>
        <end position="106"/>
    </location>
</feature>
<feature type="compositionally biased region" description="Basic and acidic residues" evidence="4">
    <location>
        <begin position="114"/>
        <end position="126"/>
    </location>
</feature>
<feature type="compositionally biased region" description="Basic and acidic residues" evidence="4">
    <location>
        <begin position="132"/>
        <end position="171"/>
    </location>
</feature>
<feature type="compositionally biased region" description="Basic and acidic residues" evidence="4">
    <location>
        <begin position="698"/>
        <end position="711"/>
    </location>
</feature>
<feature type="binding site" evidence="2">
    <location>
        <begin position="236"/>
        <end position="243"/>
    </location>
    <ligand>
        <name>ATP</name>
        <dbReference type="ChEBI" id="CHEBI:30616"/>
    </ligand>
</feature>
<protein>
    <recommendedName>
        <fullName>ATP-dependent RNA helicase mak5</fullName>
        <ecNumber>3.6.4.13</ecNumber>
    </recommendedName>
</protein>
<accession>A2QWW0</accession>
<proteinExistence type="inferred from homology"/>